<evidence type="ECO:0000256" key="1">
    <source>
        <dbReference type="SAM" id="MobiDB-lite"/>
    </source>
</evidence>
<evidence type="ECO:0000269" key="2">
    <source>
    </source>
</evidence>
<evidence type="ECO:0000305" key="3"/>
<feature type="chain" id="PRO_0000410918" description="Testis-expressed protein 22">
    <location>
        <begin position="1"/>
        <end position="189"/>
    </location>
</feature>
<feature type="region of interest" description="Disordered" evidence="1">
    <location>
        <begin position="1"/>
        <end position="120"/>
    </location>
</feature>
<feature type="compositionally biased region" description="Low complexity" evidence="1">
    <location>
        <begin position="14"/>
        <end position="24"/>
    </location>
</feature>
<feature type="compositionally biased region" description="Basic and acidic residues" evidence="1">
    <location>
        <begin position="70"/>
        <end position="87"/>
    </location>
</feature>
<feature type="compositionally biased region" description="Low complexity" evidence="1">
    <location>
        <begin position="103"/>
        <end position="114"/>
    </location>
</feature>
<feature type="sequence conflict" description="In Ref. 4; AAH48634." evidence="3" ref="4">
    <original>K</original>
    <variation>R</variation>
    <location>
        <position position="11"/>
    </location>
</feature>
<organism>
    <name type="scientific">Mus musculus</name>
    <name type="common">Mouse</name>
    <dbReference type="NCBI Taxonomy" id="10090"/>
    <lineage>
        <taxon>Eukaryota</taxon>
        <taxon>Metazoa</taxon>
        <taxon>Chordata</taxon>
        <taxon>Craniata</taxon>
        <taxon>Vertebrata</taxon>
        <taxon>Euteleostomi</taxon>
        <taxon>Mammalia</taxon>
        <taxon>Eutheria</taxon>
        <taxon>Euarchontoglires</taxon>
        <taxon>Glires</taxon>
        <taxon>Rodentia</taxon>
        <taxon>Myomorpha</taxon>
        <taxon>Muroidea</taxon>
        <taxon>Muridae</taxon>
        <taxon>Murinae</taxon>
        <taxon>Mus</taxon>
        <taxon>Mus</taxon>
    </lineage>
</organism>
<dbReference type="EMBL" id="AF522069">
    <property type="protein sequence ID" value="AAO12270.1"/>
    <property type="molecule type" value="mRNA"/>
</dbReference>
<dbReference type="EMBL" id="AK006471">
    <property type="protein sequence ID" value="BAB24604.1"/>
    <property type="molecule type" value="mRNA"/>
</dbReference>
<dbReference type="EMBL" id="AC073562">
    <property type="status" value="NOT_ANNOTATED_CDS"/>
    <property type="molecule type" value="Genomic_DNA"/>
</dbReference>
<dbReference type="EMBL" id="BC048634">
    <property type="protein sequence ID" value="AAH48634.1"/>
    <property type="molecule type" value="mRNA"/>
</dbReference>
<dbReference type="CCDS" id="CCDS26203.1"/>
<dbReference type="RefSeq" id="NP_001348848.1">
    <property type="nucleotide sequence ID" value="NM_001361919.1"/>
</dbReference>
<dbReference type="RefSeq" id="NP_001348849.1">
    <property type="nucleotide sequence ID" value="NM_001361920.1"/>
</dbReference>
<dbReference type="RefSeq" id="NP_083657.1">
    <property type="nucleotide sequence ID" value="NM_029381.2"/>
</dbReference>
<dbReference type="RefSeq" id="XP_006516402.1">
    <property type="nucleotide sequence ID" value="XM_006516339.2"/>
</dbReference>
<dbReference type="RefSeq" id="XP_006516403.1">
    <property type="nucleotide sequence ID" value="XM_006516340.2"/>
</dbReference>
<dbReference type="FunCoup" id="Q9D9U4">
    <property type="interactions" value="11"/>
</dbReference>
<dbReference type="STRING" id="10090.ENSMUSP00000012355"/>
<dbReference type="GlyGen" id="Q9D9U4">
    <property type="glycosylation" value="1 site"/>
</dbReference>
<dbReference type="PhosphoSitePlus" id="Q9D9U4"/>
<dbReference type="PaxDb" id="10090-ENSMUSP00000012355"/>
<dbReference type="PeptideAtlas" id="Q9D9U4"/>
<dbReference type="ProteomicsDB" id="263284"/>
<dbReference type="Antibodypedia" id="74215">
    <property type="antibodies" value="5 antibodies from 5 providers"/>
</dbReference>
<dbReference type="DNASU" id="75671"/>
<dbReference type="Ensembl" id="ENSMUST00000012355.14">
    <property type="protein sequence ID" value="ENSMUSP00000012355.8"/>
    <property type="gene ID" value="ENSMUSG00000012211.14"/>
</dbReference>
<dbReference type="Ensembl" id="ENSMUST00000109729.3">
    <property type="protein sequence ID" value="ENSMUSP00000105351.3"/>
    <property type="gene ID" value="ENSMUSG00000012211.14"/>
</dbReference>
<dbReference type="Ensembl" id="ENSMUST00000146107.8">
    <property type="protein sequence ID" value="ENSMUSP00000116272.2"/>
    <property type="gene ID" value="ENSMUSG00000012211.14"/>
</dbReference>
<dbReference type="GeneID" id="75671"/>
<dbReference type="KEGG" id="mmu:75671"/>
<dbReference type="UCSC" id="uc007pft.1">
    <property type="organism name" value="mouse"/>
</dbReference>
<dbReference type="AGR" id="MGI:1922921"/>
<dbReference type="CTD" id="647310"/>
<dbReference type="MGI" id="MGI:1922921">
    <property type="gene designation" value="Tex22"/>
</dbReference>
<dbReference type="VEuPathDB" id="HostDB:ENSMUSG00000012211"/>
<dbReference type="eggNOG" id="ENOG502TE8V">
    <property type="taxonomic scope" value="Eukaryota"/>
</dbReference>
<dbReference type="GeneTree" id="ENSGT00520000061791"/>
<dbReference type="HOGENOM" id="CLU_1721772_0_0_1"/>
<dbReference type="InParanoid" id="Q9D9U4"/>
<dbReference type="OMA" id="CEPPESK"/>
<dbReference type="OrthoDB" id="9836523at2759"/>
<dbReference type="TreeFam" id="TF339653"/>
<dbReference type="BioGRID-ORCS" id="75671">
    <property type="hits" value="4 hits in 76 CRISPR screens"/>
</dbReference>
<dbReference type="ChiTaRS" id="Tex22">
    <property type="organism name" value="mouse"/>
</dbReference>
<dbReference type="PRO" id="PR:Q9D9U4"/>
<dbReference type="Proteomes" id="UP000000589">
    <property type="component" value="Chromosome 12"/>
</dbReference>
<dbReference type="RNAct" id="Q9D9U4">
    <property type="molecule type" value="protein"/>
</dbReference>
<dbReference type="Bgee" id="ENSMUSG00000012211">
    <property type="expression patterns" value="Expressed in spermatid and 14 other cell types or tissues"/>
</dbReference>
<dbReference type="ExpressionAtlas" id="Q9D9U4">
    <property type="expression patterns" value="baseline and differential"/>
</dbReference>
<dbReference type="GO" id="GO:0001669">
    <property type="term" value="C:acrosomal vesicle"/>
    <property type="evidence" value="ECO:0000314"/>
    <property type="project" value="UniProtKB"/>
</dbReference>
<dbReference type="GO" id="GO:0005737">
    <property type="term" value="C:cytoplasm"/>
    <property type="evidence" value="ECO:0000314"/>
    <property type="project" value="MGI"/>
</dbReference>
<reference key="1">
    <citation type="journal article" date="2002" name="Biochem. Biophys. Res. Commun.">
        <title>Tep22, a novel testicular expressed gene, is involved in the biogenesis of the acrosome and the midpiece of the sperm tail.</title>
        <authorList>
            <person name="Neesen J."/>
            <person name="Hartwich T."/>
            <person name="Brandhorst G."/>
            <person name="Aumuller G."/>
            <person name="Glaser B."/>
            <person name="Burfeind P."/>
            <person name="Mendoza-Lujambio I."/>
        </authorList>
    </citation>
    <scope>NUCLEOTIDE SEQUENCE [MRNA]</scope>
    <scope>SUBCELLULAR LOCATION</scope>
    <scope>TISSUE SPECIFICITY</scope>
    <scope>DEVELOPMENTAL STAGE</scope>
    <source>
        <strain>BALB/cJ</strain>
        <tissue>Testis</tissue>
    </source>
</reference>
<reference key="2">
    <citation type="journal article" date="2005" name="Science">
        <title>The transcriptional landscape of the mammalian genome.</title>
        <authorList>
            <person name="Carninci P."/>
            <person name="Kasukawa T."/>
            <person name="Katayama S."/>
            <person name="Gough J."/>
            <person name="Frith M.C."/>
            <person name="Maeda N."/>
            <person name="Oyama R."/>
            <person name="Ravasi T."/>
            <person name="Lenhard B."/>
            <person name="Wells C."/>
            <person name="Kodzius R."/>
            <person name="Shimokawa K."/>
            <person name="Bajic V.B."/>
            <person name="Brenner S.E."/>
            <person name="Batalov S."/>
            <person name="Forrest A.R."/>
            <person name="Zavolan M."/>
            <person name="Davis M.J."/>
            <person name="Wilming L.G."/>
            <person name="Aidinis V."/>
            <person name="Allen J.E."/>
            <person name="Ambesi-Impiombato A."/>
            <person name="Apweiler R."/>
            <person name="Aturaliya R.N."/>
            <person name="Bailey T.L."/>
            <person name="Bansal M."/>
            <person name="Baxter L."/>
            <person name="Beisel K.W."/>
            <person name="Bersano T."/>
            <person name="Bono H."/>
            <person name="Chalk A.M."/>
            <person name="Chiu K.P."/>
            <person name="Choudhary V."/>
            <person name="Christoffels A."/>
            <person name="Clutterbuck D.R."/>
            <person name="Crowe M.L."/>
            <person name="Dalla E."/>
            <person name="Dalrymple B.P."/>
            <person name="de Bono B."/>
            <person name="Della Gatta G."/>
            <person name="di Bernardo D."/>
            <person name="Down T."/>
            <person name="Engstrom P."/>
            <person name="Fagiolini M."/>
            <person name="Faulkner G."/>
            <person name="Fletcher C.F."/>
            <person name="Fukushima T."/>
            <person name="Furuno M."/>
            <person name="Futaki S."/>
            <person name="Gariboldi M."/>
            <person name="Georgii-Hemming P."/>
            <person name="Gingeras T.R."/>
            <person name="Gojobori T."/>
            <person name="Green R.E."/>
            <person name="Gustincich S."/>
            <person name="Harbers M."/>
            <person name="Hayashi Y."/>
            <person name="Hensch T.K."/>
            <person name="Hirokawa N."/>
            <person name="Hill D."/>
            <person name="Huminiecki L."/>
            <person name="Iacono M."/>
            <person name="Ikeo K."/>
            <person name="Iwama A."/>
            <person name="Ishikawa T."/>
            <person name="Jakt M."/>
            <person name="Kanapin A."/>
            <person name="Katoh M."/>
            <person name="Kawasawa Y."/>
            <person name="Kelso J."/>
            <person name="Kitamura H."/>
            <person name="Kitano H."/>
            <person name="Kollias G."/>
            <person name="Krishnan S.P."/>
            <person name="Kruger A."/>
            <person name="Kummerfeld S.K."/>
            <person name="Kurochkin I.V."/>
            <person name="Lareau L.F."/>
            <person name="Lazarevic D."/>
            <person name="Lipovich L."/>
            <person name="Liu J."/>
            <person name="Liuni S."/>
            <person name="McWilliam S."/>
            <person name="Madan Babu M."/>
            <person name="Madera M."/>
            <person name="Marchionni L."/>
            <person name="Matsuda H."/>
            <person name="Matsuzawa S."/>
            <person name="Miki H."/>
            <person name="Mignone F."/>
            <person name="Miyake S."/>
            <person name="Morris K."/>
            <person name="Mottagui-Tabar S."/>
            <person name="Mulder N."/>
            <person name="Nakano N."/>
            <person name="Nakauchi H."/>
            <person name="Ng P."/>
            <person name="Nilsson R."/>
            <person name="Nishiguchi S."/>
            <person name="Nishikawa S."/>
            <person name="Nori F."/>
            <person name="Ohara O."/>
            <person name="Okazaki Y."/>
            <person name="Orlando V."/>
            <person name="Pang K.C."/>
            <person name="Pavan W.J."/>
            <person name="Pavesi G."/>
            <person name="Pesole G."/>
            <person name="Petrovsky N."/>
            <person name="Piazza S."/>
            <person name="Reed J."/>
            <person name="Reid J.F."/>
            <person name="Ring B.Z."/>
            <person name="Ringwald M."/>
            <person name="Rost B."/>
            <person name="Ruan Y."/>
            <person name="Salzberg S.L."/>
            <person name="Sandelin A."/>
            <person name="Schneider C."/>
            <person name="Schoenbach C."/>
            <person name="Sekiguchi K."/>
            <person name="Semple C.A."/>
            <person name="Seno S."/>
            <person name="Sessa L."/>
            <person name="Sheng Y."/>
            <person name="Shibata Y."/>
            <person name="Shimada H."/>
            <person name="Shimada K."/>
            <person name="Silva D."/>
            <person name="Sinclair B."/>
            <person name="Sperling S."/>
            <person name="Stupka E."/>
            <person name="Sugiura K."/>
            <person name="Sultana R."/>
            <person name="Takenaka Y."/>
            <person name="Taki K."/>
            <person name="Tammoja K."/>
            <person name="Tan S.L."/>
            <person name="Tang S."/>
            <person name="Taylor M.S."/>
            <person name="Tegner J."/>
            <person name="Teichmann S.A."/>
            <person name="Ueda H.R."/>
            <person name="van Nimwegen E."/>
            <person name="Verardo R."/>
            <person name="Wei C.L."/>
            <person name="Yagi K."/>
            <person name="Yamanishi H."/>
            <person name="Zabarovsky E."/>
            <person name="Zhu S."/>
            <person name="Zimmer A."/>
            <person name="Hide W."/>
            <person name="Bult C."/>
            <person name="Grimmond S.M."/>
            <person name="Teasdale R.D."/>
            <person name="Liu E.T."/>
            <person name="Brusic V."/>
            <person name="Quackenbush J."/>
            <person name="Wahlestedt C."/>
            <person name="Mattick J.S."/>
            <person name="Hume D.A."/>
            <person name="Kai C."/>
            <person name="Sasaki D."/>
            <person name="Tomaru Y."/>
            <person name="Fukuda S."/>
            <person name="Kanamori-Katayama M."/>
            <person name="Suzuki M."/>
            <person name="Aoki J."/>
            <person name="Arakawa T."/>
            <person name="Iida J."/>
            <person name="Imamura K."/>
            <person name="Itoh M."/>
            <person name="Kato T."/>
            <person name="Kawaji H."/>
            <person name="Kawagashira N."/>
            <person name="Kawashima T."/>
            <person name="Kojima M."/>
            <person name="Kondo S."/>
            <person name="Konno H."/>
            <person name="Nakano K."/>
            <person name="Ninomiya N."/>
            <person name="Nishio T."/>
            <person name="Okada M."/>
            <person name="Plessy C."/>
            <person name="Shibata K."/>
            <person name="Shiraki T."/>
            <person name="Suzuki S."/>
            <person name="Tagami M."/>
            <person name="Waki K."/>
            <person name="Watahiki A."/>
            <person name="Okamura-Oho Y."/>
            <person name="Suzuki H."/>
            <person name="Kawai J."/>
            <person name="Hayashizaki Y."/>
        </authorList>
    </citation>
    <scope>NUCLEOTIDE SEQUENCE [LARGE SCALE MRNA]</scope>
    <source>
        <strain>C57BL/6J</strain>
        <tissue>Testis</tissue>
    </source>
</reference>
<reference key="3">
    <citation type="journal article" date="2009" name="PLoS Biol.">
        <title>Lineage-specific biology revealed by a finished genome assembly of the mouse.</title>
        <authorList>
            <person name="Church D.M."/>
            <person name="Goodstadt L."/>
            <person name="Hillier L.W."/>
            <person name="Zody M.C."/>
            <person name="Goldstein S."/>
            <person name="She X."/>
            <person name="Bult C.J."/>
            <person name="Agarwala R."/>
            <person name="Cherry J.L."/>
            <person name="DiCuccio M."/>
            <person name="Hlavina W."/>
            <person name="Kapustin Y."/>
            <person name="Meric P."/>
            <person name="Maglott D."/>
            <person name="Birtle Z."/>
            <person name="Marques A.C."/>
            <person name="Graves T."/>
            <person name="Zhou S."/>
            <person name="Teague B."/>
            <person name="Potamousis K."/>
            <person name="Churas C."/>
            <person name="Place M."/>
            <person name="Herschleb J."/>
            <person name="Runnheim R."/>
            <person name="Forrest D."/>
            <person name="Amos-Landgraf J."/>
            <person name="Schwartz D.C."/>
            <person name="Cheng Z."/>
            <person name="Lindblad-Toh K."/>
            <person name="Eichler E.E."/>
            <person name="Ponting C.P."/>
        </authorList>
    </citation>
    <scope>NUCLEOTIDE SEQUENCE [LARGE SCALE GENOMIC DNA]</scope>
    <source>
        <strain>C57BL/6J</strain>
    </source>
</reference>
<reference key="4">
    <citation type="journal article" date="2004" name="Genome Res.">
        <title>The status, quality, and expansion of the NIH full-length cDNA project: the Mammalian Gene Collection (MGC).</title>
        <authorList>
            <consortium name="The MGC Project Team"/>
        </authorList>
    </citation>
    <scope>NUCLEOTIDE SEQUENCE [LARGE SCALE MRNA]</scope>
    <source>
        <tissue>Testis</tissue>
    </source>
</reference>
<reference key="5">
    <citation type="journal article" date="2010" name="Cell">
        <title>A tissue-specific atlas of mouse protein phosphorylation and expression.</title>
        <authorList>
            <person name="Huttlin E.L."/>
            <person name="Jedrychowski M.P."/>
            <person name="Elias J.E."/>
            <person name="Goswami T."/>
            <person name="Rad R."/>
            <person name="Beausoleil S.A."/>
            <person name="Villen J."/>
            <person name="Haas W."/>
            <person name="Sowa M.E."/>
            <person name="Gygi S.P."/>
        </authorList>
    </citation>
    <scope>IDENTIFICATION BY MASS SPECTROMETRY [LARGE SCALE ANALYSIS]</scope>
    <source>
        <tissue>Testis</tissue>
    </source>
</reference>
<comment type="subcellular location">
    <subcellularLocation>
        <location evidence="2">Cytoplasm</location>
    </subcellularLocation>
    <subcellularLocation>
        <location evidence="2">Cytoplasmic vesicle</location>
        <location evidence="2">Secretory vesicle</location>
        <location evidence="2">Acrosome</location>
    </subcellularLocation>
    <text>Localizes in the acrosomal region of early elongating spermatids. During late stages of elongating spermatids, no longer detected in the acrosomal region, while it mainly localizes in the cytoplasm. Incorporated into the midpiece of spermatids and is also present in the mitochondrial sheath of mature spermatozoa.</text>
</comment>
<comment type="tissue specificity">
    <text evidence="2">Mainly expressed in spermatocytes and spermatids in testis.</text>
</comment>
<comment type="developmental stage">
    <text evidence="2">First detected in 18-day-old mice (at protein level).</text>
</comment>
<proteinExistence type="evidence at protein level"/>
<keyword id="KW-0963">Cytoplasm</keyword>
<keyword id="KW-0968">Cytoplasmic vesicle</keyword>
<keyword id="KW-1185">Reference proteome</keyword>
<sequence length="189" mass="21502">MDSRQQRPQRKTLQWQLAQEQRQQSPPQGLAVASSQPDTKSKPQDDLQTQDWVCEPQELRRPGSRWNISIDERRRLALQRMQERTDTARAPSGDPLGLHPEGQQTETSPSTQSVPTPPLQACETMADPLQDIAHVLAELMSEGVERDVLISQPLRSTENSNAFQDFLAQDAPLWKDENFEAQTSRWPHS</sequence>
<gene>
    <name type="primary">Tex22</name>
    <name type="synonym">Tep22</name>
</gene>
<protein>
    <recommendedName>
        <fullName>Testis-expressed protein 22</fullName>
    </recommendedName>
    <alternativeName>
        <fullName>Testis-expressed protein of 22 kDa</fullName>
    </alternativeName>
</protein>
<accession>Q9D9U4</accession>
<accession>Q80ZP5</accession>
<name>TEX22_MOUSE</name>